<protein>
    <recommendedName>
        <fullName evidence="1">Tryptophan synthase beta chain</fullName>
        <ecNumber evidence="1">4.2.1.20</ecNumber>
    </recommendedName>
</protein>
<gene>
    <name evidence="1" type="primary">trpB</name>
    <name type="ordered locus">VF_1028</name>
</gene>
<feature type="chain" id="PRO_1000018419" description="Tryptophan synthase beta chain">
    <location>
        <begin position="1"/>
        <end position="396"/>
    </location>
</feature>
<feature type="modified residue" description="N6-(pyridoxal phosphate)lysine" evidence="1">
    <location>
        <position position="86"/>
    </location>
</feature>
<dbReference type="EC" id="4.2.1.20" evidence="1"/>
<dbReference type="EMBL" id="CP000020">
    <property type="protein sequence ID" value="AAW85523.1"/>
    <property type="molecule type" value="Genomic_DNA"/>
</dbReference>
<dbReference type="RefSeq" id="WP_011261660.1">
    <property type="nucleotide sequence ID" value="NC_006840.2"/>
</dbReference>
<dbReference type="RefSeq" id="YP_204411.1">
    <property type="nucleotide sequence ID" value="NC_006840.2"/>
</dbReference>
<dbReference type="SMR" id="Q5E623"/>
<dbReference type="STRING" id="312309.VF_1028"/>
<dbReference type="EnsemblBacteria" id="AAW85523">
    <property type="protein sequence ID" value="AAW85523"/>
    <property type="gene ID" value="VF_1028"/>
</dbReference>
<dbReference type="GeneID" id="54163700"/>
<dbReference type="KEGG" id="vfi:VF_1028"/>
<dbReference type="PATRIC" id="fig|312309.11.peg.1028"/>
<dbReference type="eggNOG" id="COG0133">
    <property type="taxonomic scope" value="Bacteria"/>
</dbReference>
<dbReference type="HOGENOM" id="CLU_016734_3_1_6"/>
<dbReference type="OrthoDB" id="9766131at2"/>
<dbReference type="UniPathway" id="UPA00035">
    <property type="reaction ID" value="UER00044"/>
</dbReference>
<dbReference type="Proteomes" id="UP000000537">
    <property type="component" value="Chromosome I"/>
</dbReference>
<dbReference type="GO" id="GO:0005737">
    <property type="term" value="C:cytoplasm"/>
    <property type="evidence" value="ECO:0007669"/>
    <property type="project" value="TreeGrafter"/>
</dbReference>
<dbReference type="GO" id="GO:0004834">
    <property type="term" value="F:tryptophan synthase activity"/>
    <property type="evidence" value="ECO:0007669"/>
    <property type="project" value="UniProtKB-UniRule"/>
</dbReference>
<dbReference type="CDD" id="cd06446">
    <property type="entry name" value="Trp-synth_B"/>
    <property type="match status" value="1"/>
</dbReference>
<dbReference type="FunFam" id="3.40.50.1100:FF:000001">
    <property type="entry name" value="Tryptophan synthase beta chain"/>
    <property type="match status" value="1"/>
</dbReference>
<dbReference type="FunFam" id="3.40.50.1100:FF:000004">
    <property type="entry name" value="Tryptophan synthase beta chain"/>
    <property type="match status" value="1"/>
</dbReference>
<dbReference type="Gene3D" id="3.40.50.1100">
    <property type="match status" value="2"/>
</dbReference>
<dbReference type="HAMAP" id="MF_00133">
    <property type="entry name" value="Trp_synth_beta"/>
    <property type="match status" value="1"/>
</dbReference>
<dbReference type="InterPro" id="IPR006653">
    <property type="entry name" value="Trp_synth_b_CS"/>
</dbReference>
<dbReference type="InterPro" id="IPR006654">
    <property type="entry name" value="Trp_synth_beta"/>
</dbReference>
<dbReference type="InterPro" id="IPR023026">
    <property type="entry name" value="Trp_synth_beta/beta-like"/>
</dbReference>
<dbReference type="InterPro" id="IPR001926">
    <property type="entry name" value="TrpB-like_PALP"/>
</dbReference>
<dbReference type="InterPro" id="IPR036052">
    <property type="entry name" value="TrpB-like_PALP_sf"/>
</dbReference>
<dbReference type="NCBIfam" id="TIGR00263">
    <property type="entry name" value="trpB"/>
    <property type="match status" value="1"/>
</dbReference>
<dbReference type="PANTHER" id="PTHR48077:SF3">
    <property type="entry name" value="TRYPTOPHAN SYNTHASE"/>
    <property type="match status" value="1"/>
</dbReference>
<dbReference type="PANTHER" id="PTHR48077">
    <property type="entry name" value="TRYPTOPHAN SYNTHASE-RELATED"/>
    <property type="match status" value="1"/>
</dbReference>
<dbReference type="Pfam" id="PF00291">
    <property type="entry name" value="PALP"/>
    <property type="match status" value="1"/>
</dbReference>
<dbReference type="PIRSF" id="PIRSF001413">
    <property type="entry name" value="Trp_syn_beta"/>
    <property type="match status" value="1"/>
</dbReference>
<dbReference type="SUPFAM" id="SSF53686">
    <property type="entry name" value="Tryptophan synthase beta subunit-like PLP-dependent enzymes"/>
    <property type="match status" value="1"/>
</dbReference>
<dbReference type="PROSITE" id="PS00168">
    <property type="entry name" value="TRP_SYNTHASE_BETA"/>
    <property type="match status" value="1"/>
</dbReference>
<comment type="function">
    <text evidence="1">The beta subunit is responsible for the synthesis of L-tryptophan from indole and L-serine.</text>
</comment>
<comment type="catalytic activity">
    <reaction evidence="1">
        <text>(1S,2R)-1-C-(indol-3-yl)glycerol 3-phosphate + L-serine = D-glyceraldehyde 3-phosphate + L-tryptophan + H2O</text>
        <dbReference type="Rhea" id="RHEA:10532"/>
        <dbReference type="ChEBI" id="CHEBI:15377"/>
        <dbReference type="ChEBI" id="CHEBI:33384"/>
        <dbReference type="ChEBI" id="CHEBI:57912"/>
        <dbReference type="ChEBI" id="CHEBI:58866"/>
        <dbReference type="ChEBI" id="CHEBI:59776"/>
        <dbReference type="EC" id="4.2.1.20"/>
    </reaction>
</comment>
<comment type="cofactor">
    <cofactor evidence="1">
        <name>pyridoxal 5'-phosphate</name>
        <dbReference type="ChEBI" id="CHEBI:597326"/>
    </cofactor>
</comment>
<comment type="pathway">
    <text evidence="1">Amino-acid biosynthesis; L-tryptophan biosynthesis; L-tryptophan from chorismate: step 5/5.</text>
</comment>
<comment type="subunit">
    <text evidence="1">Tetramer of two alpha and two beta chains.</text>
</comment>
<comment type="similarity">
    <text evidence="1">Belongs to the TrpB family.</text>
</comment>
<evidence type="ECO:0000255" key="1">
    <source>
        <dbReference type="HAMAP-Rule" id="MF_00133"/>
    </source>
</evidence>
<keyword id="KW-0028">Amino-acid biosynthesis</keyword>
<keyword id="KW-0057">Aromatic amino acid biosynthesis</keyword>
<keyword id="KW-0456">Lyase</keyword>
<keyword id="KW-0663">Pyridoxal phosphate</keyword>
<keyword id="KW-1185">Reference proteome</keyword>
<keyword id="KW-0822">Tryptophan biosynthesis</keyword>
<accession>Q5E623</accession>
<organism>
    <name type="scientific">Aliivibrio fischeri (strain ATCC 700601 / ES114)</name>
    <name type="common">Vibrio fischeri</name>
    <dbReference type="NCBI Taxonomy" id="312309"/>
    <lineage>
        <taxon>Bacteria</taxon>
        <taxon>Pseudomonadati</taxon>
        <taxon>Pseudomonadota</taxon>
        <taxon>Gammaproteobacteria</taxon>
        <taxon>Vibrionales</taxon>
        <taxon>Vibrionaceae</taxon>
        <taxon>Aliivibrio</taxon>
    </lineage>
</organism>
<reference key="1">
    <citation type="journal article" date="2005" name="Proc. Natl. Acad. Sci. U.S.A.">
        <title>Complete genome sequence of Vibrio fischeri: a symbiotic bacterium with pathogenic congeners.</title>
        <authorList>
            <person name="Ruby E.G."/>
            <person name="Urbanowski M."/>
            <person name="Campbell J."/>
            <person name="Dunn A."/>
            <person name="Faini M."/>
            <person name="Gunsalus R."/>
            <person name="Lostroh P."/>
            <person name="Lupp C."/>
            <person name="McCann J."/>
            <person name="Millikan D."/>
            <person name="Schaefer A."/>
            <person name="Stabb E."/>
            <person name="Stevens A."/>
            <person name="Visick K."/>
            <person name="Whistler C."/>
            <person name="Greenberg E.P."/>
        </authorList>
    </citation>
    <scope>NUCLEOTIDE SEQUENCE [LARGE SCALE GENOMIC DNA]</scope>
    <source>
        <strain>ATCC 700601 / ES114</strain>
    </source>
</reference>
<sequence length="396" mass="42912">MAKLDAYFGEYGGQYVPQILVPALEQLEQAFIDAQEDPDFRSEFMTLLQEYAGRPTALTLCRNLTKGTKTKLYLKREDLLHGGAHKTNQVLGQALLAKRMGKDEIIAETGAGQHGVATALACALLGLKCRVYMGAKDVERQSPNVFRMKLMGAEVIPVHSGSATLKDACNEALRDWSATYETAHYLLGTAAGPHPFPTIVREFQRMIGEETKMQILAREGRLPDAVIACVGGGSNAIGMFADFIEEESVKLIGVEPAGKGIDTDQHGAPLKHGKTGIFFGMKAPLMQDEHGQIEESYSVSAGLDFPSVGPQHAHLNAIGRAEYGAVTDDEALDAFKILARNEGIIPALESSHALAYALQLAQAEPEKEQLLVVNLSGRGDKDIFTVHDILKEKGEI</sequence>
<proteinExistence type="inferred from homology"/>
<name>TRPB_ALIF1</name>